<keyword id="KW-0963">Cytoplasm</keyword>
<keyword id="KW-0704">Schiff base</keyword>
<keyword id="KW-0784">Thiamine biosynthesis</keyword>
<keyword id="KW-0808">Transferase</keyword>
<sequence>MSNVRSDKPFTLAGRTFQSRLLVGTGKYRDMEETRLATEASGAEIVTVAVRRTNLGQNAGEPNLLDVLSPDKYTILPNTAGCFDAVEAVRTCRLARELLDGRKSHESRTLVKLEVLADQKTLFPNVIETLKAAEVLVKEGFDVMVYTSDDPIIARQLAEVGCIAVMPLAGLIGTGLGICNPYNLQIILEESKVPVLVDAGVGTASDATIAMEMGCEAVLMNSAIAHAQQPVLMAEAMKHAIVAGRMAYLAGRMPKKLYASASSPLDGLIK</sequence>
<comment type="function">
    <text evidence="1">Catalyzes the rearrangement of 1-deoxy-D-xylulose 5-phosphate (DXP) to produce the thiazole phosphate moiety of thiamine. Sulfur is provided by the thiocarboxylate moiety of the carrier protein ThiS. In vitro, sulfur can be provided by H(2)S.</text>
</comment>
<comment type="catalytic activity">
    <reaction evidence="1">
        <text>[ThiS sulfur-carrier protein]-C-terminal-Gly-aminoethanethioate + 2-iminoacetate + 1-deoxy-D-xylulose 5-phosphate = [ThiS sulfur-carrier protein]-C-terminal Gly-Gly + 2-[(2R,5Z)-2-carboxy-4-methylthiazol-5(2H)-ylidene]ethyl phosphate + 2 H2O + H(+)</text>
        <dbReference type="Rhea" id="RHEA:26297"/>
        <dbReference type="Rhea" id="RHEA-COMP:12909"/>
        <dbReference type="Rhea" id="RHEA-COMP:19908"/>
        <dbReference type="ChEBI" id="CHEBI:15377"/>
        <dbReference type="ChEBI" id="CHEBI:15378"/>
        <dbReference type="ChEBI" id="CHEBI:57792"/>
        <dbReference type="ChEBI" id="CHEBI:62899"/>
        <dbReference type="ChEBI" id="CHEBI:77846"/>
        <dbReference type="ChEBI" id="CHEBI:90778"/>
        <dbReference type="ChEBI" id="CHEBI:232372"/>
        <dbReference type="EC" id="2.8.1.10"/>
    </reaction>
</comment>
<comment type="pathway">
    <text evidence="1">Cofactor biosynthesis; thiamine diphosphate biosynthesis.</text>
</comment>
<comment type="subunit">
    <text evidence="1">Homotetramer. Forms heterodimers with either ThiH or ThiS.</text>
</comment>
<comment type="subcellular location">
    <subcellularLocation>
        <location evidence="1">Cytoplasm</location>
    </subcellularLocation>
</comment>
<comment type="similarity">
    <text evidence="1">Belongs to the ThiG family.</text>
</comment>
<proteinExistence type="inferred from homology"/>
<dbReference type="EC" id="2.8.1.10" evidence="1"/>
<dbReference type="EMBL" id="CP000712">
    <property type="protein sequence ID" value="ABQ81097.1"/>
    <property type="molecule type" value="Genomic_DNA"/>
</dbReference>
<dbReference type="SMR" id="A5WAD7"/>
<dbReference type="KEGG" id="ppf:Pput_4977"/>
<dbReference type="eggNOG" id="COG2022">
    <property type="taxonomic scope" value="Bacteria"/>
</dbReference>
<dbReference type="HOGENOM" id="CLU_062233_1_1_6"/>
<dbReference type="UniPathway" id="UPA00060"/>
<dbReference type="GO" id="GO:0005737">
    <property type="term" value="C:cytoplasm"/>
    <property type="evidence" value="ECO:0007669"/>
    <property type="project" value="UniProtKB-SubCell"/>
</dbReference>
<dbReference type="GO" id="GO:1990107">
    <property type="term" value="F:thiazole synthase activity"/>
    <property type="evidence" value="ECO:0007669"/>
    <property type="project" value="UniProtKB-EC"/>
</dbReference>
<dbReference type="GO" id="GO:0009229">
    <property type="term" value="P:thiamine diphosphate biosynthetic process"/>
    <property type="evidence" value="ECO:0007669"/>
    <property type="project" value="UniProtKB-UniRule"/>
</dbReference>
<dbReference type="CDD" id="cd04728">
    <property type="entry name" value="ThiG"/>
    <property type="match status" value="1"/>
</dbReference>
<dbReference type="Gene3D" id="3.20.20.70">
    <property type="entry name" value="Aldolase class I"/>
    <property type="match status" value="1"/>
</dbReference>
<dbReference type="HAMAP" id="MF_00443">
    <property type="entry name" value="ThiG"/>
    <property type="match status" value="1"/>
</dbReference>
<dbReference type="InterPro" id="IPR013785">
    <property type="entry name" value="Aldolase_TIM"/>
</dbReference>
<dbReference type="InterPro" id="IPR033983">
    <property type="entry name" value="Thiazole_synthase_ThiG"/>
</dbReference>
<dbReference type="InterPro" id="IPR008867">
    <property type="entry name" value="ThiG"/>
</dbReference>
<dbReference type="PANTHER" id="PTHR34266">
    <property type="entry name" value="THIAZOLE SYNTHASE"/>
    <property type="match status" value="1"/>
</dbReference>
<dbReference type="PANTHER" id="PTHR34266:SF2">
    <property type="entry name" value="THIAZOLE SYNTHASE"/>
    <property type="match status" value="1"/>
</dbReference>
<dbReference type="Pfam" id="PF05690">
    <property type="entry name" value="ThiG"/>
    <property type="match status" value="1"/>
</dbReference>
<dbReference type="SUPFAM" id="SSF110399">
    <property type="entry name" value="ThiG-like"/>
    <property type="match status" value="1"/>
</dbReference>
<name>THIG_PSEP1</name>
<reference key="1">
    <citation type="submission" date="2007-05" db="EMBL/GenBank/DDBJ databases">
        <title>Complete sequence of Pseudomonas putida F1.</title>
        <authorList>
            <consortium name="US DOE Joint Genome Institute"/>
            <person name="Copeland A."/>
            <person name="Lucas S."/>
            <person name="Lapidus A."/>
            <person name="Barry K."/>
            <person name="Detter J.C."/>
            <person name="Glavina del Rio T."/>
            <person name="Hammon N."/>
            <person name="Israni S."/>
            <person name="Dalin E."/>
            <person name="Tice H."/>
            <person name="Pitluck S."/>
            <person name="Chain P."/>
            <person name="Malfatti S."/>
            <person name="Shin M."/>
            <person name="Vergez L."/>
            <person name="Schmutz J."/>
            <person name="Larimer F."/>
            <person name="Land M."/>
            <person name="Hauser L."/>
            <person name="Kyrpides N."/>
            <person name="Lykidis A."/>
            <person name="Parales R."/>
            <person name="Richardson P."/>
        </authorList>
    </citation>
    <scope>NUCLEOTIDE SEQUENCE [LARGE SCALE GENOMIC DNA]</scope>
    <source>
        <strain>ATCC 700007 / DSM 6899 / JCM 31910 / BCRC 17059 / LMG 24140 / F1</strain>
    </source>
</reference>
<organism>
    <name type="scientific">Pseudomonas putida (strain ATCC 700007 / DSM 6899 / JCM 31910 / BCRC 17059 / LMG 24140 / F1)</name>
    <dbReference type="NCBI Taxonomy" id="351746"/>
    <lineage>
        <taxon>Bacteria</taxon>
        <taxon>Pseudomonadati</taxon>
        <taxon>Pseudomonadota</taxon>
        <taxon>Gammaproteobacteria</taxon>
        <taxon>Pseudomonadales</taxon>
        <taxon>Pseudomonadaceae</taxon>
        <taxon>Pseudomonas</taxon>
    </lineage>
</organism>
<gene>
    <name evidence="1" type="primary">thiG</name>
    <name type="ordered locus">Pput_4977</name>
</gene>
<protein>
    <recommendedName>
        <fullName evidence="1">Thiazole synthase</fullName>
        <ecNumber evidence="1">2.8.1.10</ecNumber>
    </recommendedName>
</protein>
<evidence type="ECO:0000255" key="1">
    <source>
        <dbReference type="HAMAP-Rule" id="MF_00443"/>
    </source>
</evidence>
<feature type="chain" id="PRO_1000026030" description="Thiazole synthase">
    <location>
        <begin position="1"/>
        <end position="270"/>
    </location>
</feature>
<feature type="active site" description="Schiff-base intermediate with DXP" evidence="1">
    <location>
        <position position="112"/>
    </location>
</feature>
<feature type="binding site" evidence="1">
    <location>
        <position position="173"/>
    </location>
    <ligand>
        <name>1-deoxy-D-xylulose 5-phosphate</name>
        <dbReference type="ChEBI" id="CHEBI:57792"/>
    </ligand>
</feature>
<feature type="binding site" evidence="1">
    <location>
        <begin position="199"/>
        <end position="200"/>
    </location>
    <ligand>
        <name>1-deoxy-D-xylulose 5-phosphate</name>
        <dbReference type="ChEBI" id="CHEBI:57792"/>
    </ligand>
</feature>
<feature type="binding site" evidence="1">
    <location>
        <begin position="221"/>
        <end position="222"/>
    </location>
    <ligand>
        <name>1-deoxy-D-xylulose 5-phosphate</name>
        <dbReference type="ChEBI" id="CHEBI:57792"/>
    </ligand>
</feature>
<accession>A5WAD7</accession>